<keyword id="KW-0276">Fatty acid metabolism</keyword>
<keyword id="KW-0413">Isomerase</keyword>
<keyword id="KW-0442">Lipid degradation</keyword>
<keyword id="KW-0443">Lipid metabolism</keyword>
<keyword id="KW-0456">Lyase</keyword>
<keyword id="KW-0511">Multifunctional enzyme</keyword>
<keyword id="KW-0520">NAD</keyword>
<keyword id="KW-0560">Oxidoreductase</keyword>
<protein>
    <recommendedName>
        <fullName evidence="1">Fatty acid oxidation complex subunit alpha</fullName>
    </recommendedName>
    <domain>
        <recommendedName>
            <fullName evidence="1">Enoyl-CoA hydratase/Delta(3)-cis-Delta(2)-trans-enoyl-CoA isomerase/3-hydroxybutyryl-CoA epimerase</fullName>
            <ecNumber evidence="1">4.2.1.17</ecNumber>
            <ecNumber evidence="1">5.1.2.3</ecNumber>
            <ecNumber evidence="1">5.3.3.8</ecNumber>
        </recommendedName>
    </domain>
    <domain>
        <recommendedName>
            <fullName evidence="1">3-hydroxyacyl-CoA dehydrogenase</fullName>
            <ecNumber evidence="1">1.1.1.35</ecNumber>
        </recommendedName>
    </domain>
</protein>
<comment type="function">
    <text evidence="1">Involved in the aerobic and anaerobic degradation of long-chain fatty acids via beta-oxidation cycle. Catalyzes the formation of 3-oxoacyl-CoA from enoyl-CoA via L-3-hydroxyacyl-CoA. It can also use D-3-hydroxyacyl-CoA and cis-3-enoyl-CoA as substrate.</text>
</comment>
<comment type="catalytic activity">
    <reaction evidence="1">
        <text>a (3S)-3-hydroxyacyl-CoA + NAD(+) = a 3-oxoacyl-CoA + NADH + H(+)</text>
        <dbReference type="Rhea" id="RHEA:22432"/>
        <dbReference type="ChEBI" id="CHEBI:15378"/>
        <dbReference type="ChEBI" id="CHEBI:57318"/>
        <dbReference type="ChEBI" id="CHEBI:57540"/>
        <dbReference type="ChEBI" id="CHEBI:57945"/>
        <dbReference type="ChEBI" id="CHEBI:90726"/>
        <dbReference type="EC" id="1.1.1.35"/>
    </reaction>
</comment>
<comment type="catalytic activity">
    <reaction evidence="1">
        <text>a (3S)-3-hydroxyacyl-CoA = a (2E)-enoyl-CoA + H2O</text>
        <dbReference type="Rhea" id="RHEA:16105"/>
        <dbReference type="ChEBI" id="CHEBI:15377"/>
        <dbReference type="ChEBI" id="CHEBI:57318"/>
        <dbReference type="ChEBI" id="CHEBI:58856"/>
        <dbReference type="EC" id="4.2.1.17"/>
    </reaction>
</comment>
<comment type="catalytic activity">
    <reaction evidence="1">
        <text>a 4-saturated-(3S)-3-hydroxyacyl-CoA = a (3E)-enoyl-CoA + H2O</text>
        <dbReference type="Rhea" id="RHEA:20724"/>
        <dbReference type="ChEBI" id="CHEBI:15377"/>
        <dbReference type="ChEBI" id="CHEBI:58521"/>
        <dbReference type="ChEBI" id="CHEBI:137480"/>
        <dbReference type="EC" id="4.2.1.17"/>
    </reaction>
</comment>
<comment type="catalytic activity">
    <reaction evidence="1">
        <text>(3S)-3-hydroxybutanoyl-CoA = (3R)-3-hydroxybutanoyl-CoA</text>
        <dbReference type="Rhea" id="RHEA:21760"/>
        <dbReference type="ChEBI" id="CHEBI:57315"/>
        <dbReference type="ChEBI" id="CHEBI:57316"/>
        <dbReference type="EC" id="5.1.2.3"/>
    </reaction>
</comment>
<comment type="catalytic activity">
    <reaction evidence="1">
        <text>a (3Z)-enoyl-CoA = a 4-saturated (2E)-enoyl-CoA</text>
        <dbReference type="Rhea" id="RHEA:45900"/>
        <dbReference type="ChEBI" id="CHEBI:85097"/>
        <dbReference type="ChEBI" id="CHEBI:85489"/>
        <dbReference type="EC" id="5.3.3.8"/>
    </reaction>
</comment>
<comment type="catalytic activity">
    <reaction evidence="1">
        <text>a (3E)-enoyl-CoA = a 4-saturated (2E)-enoyl-CoA</text>
        <dbReference type="Rhea" id="RHEA:45228"/>
        <dbReference type="ChEBI" id="CHEBI:58521"/>
        <dbReference type="ChEBI" id="CHEBI:85097"/>
        <dbReference type="EC" id="5.3.3.8"/>
    </reaction>
</comment>
<comment type="pathway">
    <text evidence="1">Lipid metabolism; fatty acid beta-oxidation.</text>
</comment>
<comment type="subunit">
    <text evidence="1">Heterotetramer of two alpha chains (FadB) and two beta chains (FadA).</text>
</comment>
<comment type="similarity">
    <text evidence="1">In the N-terminal section; belongs to the enoyl-CoA hydratase/isomerase family.</text>
</comment>
<comment type="similarity">
    <text evidence="1">In the C-terminal section; belongs to the 3-hydroxyacyl-CoA dehydrogenase family.</text>
</comment>
<proteinExistence type="inferred from homology"/>
<reference key="1">
    <citation type="journal article" date="2008" name="J. Bacteriol.">
        <title>Comparative genome sequence analysis of multidrug-resistant Acinetobacter baumannii.</title>
        <authorList>
            <person name="Adams M.D."/>
            <person name="Goglin K."/>
            <person name="Molyneaux N."/>
            <person name="Hujer K.M."/>
            <person name="Lavender H."/>
            <person name="Jamison J.J."/>
            <person name="MacDonald I.J."/>
            <person name="Martin K.M."/>
            <person name="Russo T."/>
            <person name="Campagnari A.A."/>
            <person name="Hujer A.M."/>
            <person name="Bonomo R.A."/>
            <person name="Gill S.R."/>
        </authorList>
    </citation>
    <scope>NUCLEOTIDE SEQUENCE [LARGE SCALE GENOMIC DNA]</scope>
    <source>
        <strain>AB307-0294</strain>
    </source>
</reference>
<accession>B7H1I0</accession>
<evidence type="ECO:0000255" key="1">
    <source>
        <dbReference type="HAMAP-Rule" id="MF_01621"/>
    </source>
</evidence>
<sequence length="717" mass="77874">MIHAGNAITVQMLADGIAEFRFDLQGESVNKFNRATIEDFKAAIAAVKANNDIKGLVVTSGKSTFIVGADITEFGQNFAQGEKAIVDWLMPVHEIFNSFEDLDLPKVAAINGMALGGGFEMCLVCDYRVMSEAAQVGLPEIKLGIYPGFGGSVRLSRLIGIDNAVEWMAMATPKKPAAALKDGAVDAVVAADKLLDAATDLVKQAISGRLNWKAKRQEKLEAVKLNPLEQMMAFNTAKGAVLAKANPAQYPAPKLLLDSLQAGASLARDEALKAEAEGFAKAAVTPQAEALIGLFINDQVVKKASKQHEKGAHPVNQAAVLGAGIMGGGIAYQAASKGTPIIMKDIGNPQLALGMKEANNLLTKQVERKKMKPVQMGETLARIRPTLSYEEFKEVDIVIEAVTENPKVKEIVLAETEKNVRENTIIASNTSTISITRLAKALQRPENFVGMHFFNPVHMMPLVEVIRGEKTSEEAIATTVVLAQKMGKTPIVVNDCPGFLVNRVLFPYFGAFDLLVKDGADFQQIDNVMSKFGWPMGPAYLIDVVGIDTGVHGAEVMAEGFPDRMKPDYKGAIEAMYEAKRLGQKNDVGFYKYELDKKGKKAKTVDPTAYEVIAPFVTGEKREFDNQEIIDRMMLALCNETVRCLEDNIVATASEADMAMIMGIGFPPFRGGPCRYIDQTGVAEYVALCDKYAHLGKAYEAPQMLRDMAANNKKFYG</sequence>
<organism>
    <name type="scientific">Acinetobacter baumannii (strain AB307-0294)</name>
    <dbReference type="NCBI Taxonomy" id="557600"/>
    <lineage>
        <taxon>Bacteria</taxon>
        <taxon>Pseudomonadati</taxon>
        <taxon>Pseudomonadota</taxon>
        <taxon>Gammaproteobacteria</taxon>
        <taxon>Moraxellales</taxon>
        <taxon>Moraxellaceae</taxon>
        <taxon>Acinetobacter</taxon>
        <taxon>Acinetobacter calcoaceticus/baumannii complex</taxon>
    </lineage>
</organism>
<feature type="chain" id="PRO_1000186026" description="Fatty acid oxidation complex subunit alpha">
    <location>
        <begin position="1"/>
        <end position="717"/>
    </location>
</feature>
<feature type="region of interest" description="Enoyl-CoA hydratase/isomerase" evidence="1">
    <location>
        <begin position="1"/>
        <end position="190"/>
    </location>
</feature>
<feature type="region of interest" description="3-hydroxyacyl-CoA dehydrogenase" evidence="1">
    <location>
        <begin position="313"/>
        <end position="717"/>
    </location>
</feature>
<feature type="active site" description="For 3-hydroxyacyl-CoA dehydrogenase activity" evidence="1">
    <location>
        <position position="452"/>
    </location>
</feature>
<feature type="binding site" evidence="1">
    <location>
        <position position="298"/>
    </location>
    <ligand>
        <name>substrate</name>
    </ligand>
</feature>
<feature type="binding site" evidence="1">
    <location>
        <position position="326"/>
    </location>
    <ligand>
        <name>NAD(+)</name>
        <dbReference type="ChEBI" id="CHEBI:57540"/>
    </ligand>
</feature>
<feature type="binding site" evidence="1">
    <location>
        <position position="345"/>
    </location>
    <ligand>
        <name>NAD(+)</name>
        <dbReference type="ChEBI" id="CHEBI:57540"/>
    </ligand>
</feature>
<feature type="binding site" evidence="1">
    <location>
        <begin position="402"/>
        <end position="404"/>
    </location>
    <ligand>
        <name>NAD(+)</name>
        <dbReference type="ChEBI" id="CHEBI:57540"/>
    </ligand>
</feature>
<feature type="binding site" evidence="1">
    <location>
        <position position="409"/>
    </location>
    <ligand>
        <name>NAD(+)</name>
        <dbReference type="ChEBI" id="CHEBI:57540"/>
    </ligand>
</feature>
<feature type="binding site" evidence="1">
    <location>
        <position position="431"/>
    </location>
    <ligand>
        <name>NAD(+)</name>
        <dbReference type="ChEBI" id="CHEBI:57540"/>
    </ligand>
</feature>
<feature type="binding site" evidence="1">
    <location>
        <position position="455"/>
    </location>
    <ligand>
        <name>NAD(+)</name>
        <dbReference type="ChEBI" id="CHEBI:57540"/>
    </ligand>
</feature>
<feature type="binding site" evidence="1">
    <location>
        <position position="502"/>
    </location>
    <ligand>
        <name>substrate</name>
    </ligand>
</feature>
<feature type="site" description="Important for catalytic activity" evidence="1">
    <location>
        <position position="120"/>
    </location>
</feature>
<feature type="site" description="Important for catalytic activity" evidence="1">
    <location>
        <position position="140"/>
    </location>
</feature>
<gene>
    <name evidence="1" type="primary">fadB</name>
    <name type="ordered locus">ABBFA_003230</name>
</gene>
<name>FADB_ACIB3</name>
<dbReference type="EC" id="4.2.1.17" evidence="1"/>
<dbReference type="EC" id="5.1.2.3" evidence="1"/>
<dbReference type="EC" id="5.3.3.8" evidence="1"/>
<dbReference type="EC" id="1.1.1.35" evidence="1"/>
<dbReference type="EMBL" id="CP001172">
    <property type="protein sequence ID" value="ACJ56671.1"/>
    <property type="molecule type" value="Genomic_DNA"/>
</dbReference>
<dbReference type="RefSeq" id="WP_000580942.1">
    <property type="nucleotide sequence ID" value="NZ_CP001172.1"/>
</dbReference>
<dbReference type="SMR" id="B7H1I0"/>
<dbReference type="HOGENOM" id="CLU_009834_16_3_6"/>
<dbReference type="UniPathway" id="UPA00659"/>
<dbReference type="Proteomes" id="UP000006924">
    <property type="component" value="Chromosome"/>
</dbReference>
<dbReference type="GO" id="GO:0036125">
    <property type="term" value="C:fatty acid beta-oxidation multienzyme complex"/>
    <property type="evidence" value="ECO:0007669"/>
    <property type="project" value="InterPro"/>
</dbReference>
<dbReference type="GO" id="GO:0008692">
    <property type="term" value="F:3-hydroxybutyryl-CoA epimerase activity"/>
    <property type="evidence" value="ECO:0007669"/>
    <property type="project" value="UniProtKB-UniRule"/>
</dbReference>
<dbReference type="GO" id="GO:0004165">
    <property type="term" value="F:delta(3)-delta(2)-enoyl-CoA isomerase activity"/>
    <property type="evidence" value="ECO:0007669"/>
    <property type="project" value="UniProtKB-UniRule"/>
</dbReference>
<dbReference type="GO" id="GO:0004300">
    <property type="term" value="F:enoyl-CoA hydratase activity"/>
    <property type="evidence" value="ECO:0007669"/>
    <property type="project" value="UniProtKB-UniRule"/>
</dbReference>
<dbReference type="GO" id="GO:0016509">
    <property type="term" value="F:long-chain-3-hydroxyacyl-CoA dehydrogenase activity"/>
    <property type="evidence" value="ECO:0007669"/>
    <property type="project" value="TreeGrafter"/>
</dbReference>
<dbReference type="GO" id="GO:0070403">
    <property type="term" value="F:NAD+ binding"/>
    <property type="evidence" value="ECO:0007669"/>
    <property type="project" value="InterPro"/>
</dbReference>
<dbReference type="GO" id="GO:0006635">
    <property type="term" value="P:fatty acid beta-oxidation"/>
    <property type="evidence" value="ECO:0007669"/>
    <property type="project" value="UniProtKB-UniRule"/>
</dbReference>
<dbReference type="CDD" id="cd06558">
    <property type="entry name" value="crotonase-like"/>
    <property type="match status" value="1"/>
</dbReference>
<dbReference type="FunFam" id="3.40.50.720:FF:000009">
    <property type="entry name" value="Fatty oxidation complex, alpha subunit"/>
    <property type="match status" value="1"/>
</dbReference>
<dbReference type="Gene3D" id="1.10.1040.50">
    <property type="match status" value="1"/>
</dbReference>
<dbReference type="Gene3D" id="3.90.226.10">
    <property type="entry name" value="2-enoyl-CoA Hydratase, Chain A, domain 1"/>
    <property type="match status" value="1"/>
</dbReference>
<dbReference type="Gene3D" id="3.40.50.720">
    <property type="entry name" value="NAD(P)-binding Rossmann-like Domain"/>
    <property type="match status" value="1"/>
</dbReference>
<dbReference type="HAMAP" id="MF_01621">
    <property type="entry name" value="FadB"/>
    <property type="match status" value="1"/>
</dbReference>
<dbReference type="InterPro" id="IPR006180">
    <property type="entry name" value="3-OHacyl-CoA_DH_CS"/>
</dbReference>
<dbReference type="InterPro" id="IPR006176">
    <property type="entry name" value="3-OHacyl-CoA_DH_NAD-bd"/>
</dbReference>
<dbReference type="InterPro" id="IPR006108">
    <property type="entry name" value="3HC_DH_C"/>
</dbReference>
<dbReference type="InterPro" id="IPR008927">
    <property type="entry name" value="6-PGluconate_DH-like_C_sf"/>
</dbReference>
<dbReference type="InterPro" id="IPR029045">
    <property type="entry name" value="ClpP/crotonase-like_dom_sf"/>
</dbReference>
<dbReference type="InterPro" id="IPR018376">
    <property type="entry name" value="Enoyl-CoA_hyd/isom_CS"/>
</dbReference>
<dbReference type="InterPro" id="IPR001753">
    <property type="entry name" value="Enoyl-CoA_hydra/iso"/>
</dbReference>
<dbReference type="InterPro" id="IPR050136">
    <property type="entry name" value="FA_oxidation_alpha_subunit"/>
</dbReference>
<dbReference type="InterPro" id="IPR012799">
    <property type="entry name" value="FadB"/>
</dbReference>
<dbReference type="InterPro" id="IPR036291">
    <property type="entry name" value="NAD(P)-bd_dom_sf"/>
</dbReference>
<dbReference type="NCBIfam" id="TIGR02437">
    <property type="entry name" value="FadB"/>
    <property type="match status" value="1"/>
</dbReference>
<dbReference type="NCBIfam" id="NF008727">
    <property type="entry name" value="PRK11730.1"/>
    <property type="match status" value="1"/>
</dbReference>
<dbReference type="PANTHER" id="PTHR43612">
    <property type="entry name" value="TRIFUNCTIONAL ENZYME SUBUNIT ALPHA"/>
    <property type="match status" value="1"/>
</dbReference>
<dbReference type="PANTHER" id="PTHR43612:SF3">
    <property type="entry name" value="TRIFUNCTIONAL ENZYME SUBUNIT ALPHA, MITOCHONDRIAL"/>
    <property type="match status" value="1"/>
</dbReference>
<dbReference type="Pfam" id="PF00725">
    <property type="entry name" value="3HCDH"/>
    <property type="match status" value="1"/>
</dbReference>
<dbReference type="Pfam" id="PF02737">
    <property type="entry name" value="3HCDH_N"/>
    <property type="match status" value="1"/>
</dbReference>
<dbReference type="Pfam" id="PF00378">
    <property type="entry name" value="ECH_1"/>
    <property type="match status" value="1"/>
</dbReference>
<dbReference type="SUPFAM" id="SSF48179">
    <property type="entry name" value="6-phosphogluconate dehydrogenase C-terminal domain-like"/>
    <property type="match status" value="2"/>
</dbReference>
<dbReference type="SUPFAM" id="SSF52096">
    <property type="entry name" value="ClpP/crotonase"/>
    <property type="match status" value="1"/>
</dbReference>
<dbReference type="SUPFAM" id="SSF51735">
    <property type="entry name" value="NAD(P)-binding Rossmann-fold domains"/>
    <property type="match status" value="1"/>
</dbReference>
<dbReference type="PROSITE" id="PS00067">
    <property type="entry name" value="3HCDH"/>
    <property type="match status" value="1"/>
</dbReference>
<dbReference type="PROSITE" id="PS00166">
    <property type="entry name" value="ENOYL_COA_HYDRATASE"/>
    <property type="match status" value="1"/>
</dbReference>